<organism>
    <name type="scientific">Corynephage omega</name>
    <dbReference type="NCBI Taxonomy" id="10714"/>
    <lineage>
        <taxon>Viruses</taxon>
        <taxon>Duplodnaviria</taxon>
        <taxon>Heunggongvirae</taxon>
        <taxon>Uroviricota</taxon>
        <taxon>Caudoviricetes</taxon>
        <taxon>Lambdavirus</taxon>
    </lineage>
</organism>
<name>DTX_COROM</name>
<protein>
    <recommendedName>
        <fullName>Diphtheria toxin</fullName>
        <shortName>DT</shortName>
    </recommendedName>
    <alternativeName>
        <fullName>NAD(+)--diphthamide ADP-ribosyltransferase</fullName>
        <ecNumber>2.4.2.36</ecNumber>
    </alternativeName>
    <component>
        <recommendedName>
            <fullName>Diphtheria toxin fragment A</fullName>
        </recommendedName>
    </component>
    <component>
        <recommendedName>
            <fullName>Diphtheria toxin fragment B</fullName>
        </recommendedName>
    </component>
</protein>
<organismHost>
    <name type="scientific">Corynebacterium diphtheriae</name>
    <dbReference type="NCBI Taxonomy" id="1717"/>
</organismHost>
<keyword id="KW-0165">Cleavage on pair of basic residues</keyword>
<keyword id="KW-1015">Disulfide bond</keyword>
<keyword id="KW-0328">Glycosyltransferase</keyword>
<keyword id="KW-0520">NAD</keyword>
<keyword id="KW-0548">Nucleotidyltransferase</keyword>
<keyword id="KW-0732">Signal</keyword>
<keyword id="KW-0800">Toxin</keyword>
<keyword id="KW-0808">Transferase</keyword>
<dbReference type="EC" id="2.4.2.36"/>
<dbReference type="EMBL" id="V01536">
    <property type="protein sequence ID" value="CAA24778.1"/>
    <property type="molecule type" value="Genomic_DNA"/>
</dbReference>
<dbReference type="PIR" id="A00728">
    <property type="entry name" value="DOCGPO"/>
</dbReference>
<dbReference type="BMRB" id="P00587"/>
<dbReference type="SMR" id="P00587"/>
<dbReference type="DIP" id="DIP-370N"/>
<dbReference type="MINT" id="P00587"/>
<dbReference type="DrugBank" id="DB01792">
    <property type="generic name" value="Adenylyl-(3'-5')-uridine 3'-monophosphate"/>
</dbReference>
<dbReference type="TCDB" id="1.C.7.1.1">
    <property type="family name" value="the diphtheria toxin (dt) family"/>
</dbReference>
<dbReference type="GO" id="GO:0005615">
    <property type="term" value="C:extracellular space"/>
    <property type="evidence" value="ECO:0007669"/>
    <property type="project" value="InterPro"/>
</dbReference>
<dbReference type="GO" id="GO:0047286">
    <property type="term" value="F:NAD+-diphthamide ADP-ribosyltransferase activity"/>
    <property type="evidence" value="ECO:0007669"/>
    <property type="project" value="UniProtKB-EC"/>
</dbReference>
<dbReference type="GO" id="GO:0016779">
    <property type="term" value="F:nucleotidyltransferase activity"/>
    <property type="evidence" value="ECO:0007669"/>
    <property type="project" value="UniProtKB-KW"/>
</dbReference>
<dbReference type="GO" id="GO:0090729">
    <property type="term" value="F:toxin activity"/>
    <property type="evidence" value="ECO:0007669"/>
    <property type="project" value="UniProtKB-KW"/>
</dbReference>
<dbReference type="FunFam" id="1.10.490.40:FF:000001">
    <property type="entry name" value="Diphtheria toxin"/>
    <property type="match status" value="1"/>
</dbReference>
<dbReference type="FunFam" id="2.60.40.700:FF:000001">
    <property type="entry name" value="Diphtheria toxin"/>
    <property type="match status" value="1"/>
</dbReference>
<dbReference type="Gene3D" id="3.90.175.10">
    <property type="entry name" value="Diphtheria Toxin, domain 1"/>
    <property type="match status" value="1"/>
</dbReference>
<dbReference type="Gene3D" id="2.60.40.700">
    <property type="entry name" value="Diphtheria toxin, receptor-binding domain"/>
    <property type="match status" value="1"/>
</dbReference>
<dbReference type="Gene3D" id="1.10.490.40">
    <property type="entry name" value="Diphtheria toxin, translocation domain"/>
    <property type="match status" value="1"/>
</dbReference>
<dbReference type="InterPro" id="IPR036799">
    <property type="entry name" value="Diphtheria_tox_rcpt-bd_dom_sf"/>
</dbReference>
<dbReference type="InterPro" id="IPR036801">
    <property type="entry name" value="Diphtheria_tox_transloc_sf"/>
</dbReference>
<dbReference type="InterPro" id="IPR000512">
    <property type="entry name" value="Diphtheria_toxin"/>
</dbReference>
<dbReference type="InterPro" id="IPR022406">
    <property type="entry name" value="Diphtheria_toxin_catalytic_dom"/>
</dbReference>
<dbReference type="InterPro" id="IPR022404">
    <property type="entry name" value="Diphtheria_toxin_rcpt-bd_dom"/>
</dbReference>
<dbReference type="Pfam" id="PF02763">
    <property type="entry name" value="Diphtheria_C"/>
    <property type="match status" value="1"/>
</dbReference>
<dbReference type="Pfam" id="PF01324">
    <property type="entry name" value="Diphtheria_R"/>
    <property type="match status" value="1"/>
</dbReference>
<dbReference type="Pfam" id="PF02764">
    <property type="entry name" value="Diphtheria_T"/>
    <property type="match status" value="1"/>
</dbReference>
<dbReference type="PIRSF" id="PIRSF000490">
    <property type="entry name" value="Diphtheria_toxin"/>
    <property type="match status" value="1"/>
</dbReference>
<dbReference type="PRINTS" id="PR00769">
    <property type="entry name" value="DPTHRIATOXIN"/>
</dbReference>
<dbReference type="SUPFAM" id="SSF56399">
    <property type="entry name" value="ADP-ribosylation"/>
    <property type="match status" value="1"/>
</dbReference>
<dbReference type="SUPFAM" id="SSF49380">
    <property type="entry name" value="Diphtheria toxin, C-terminal domain"/>
    <property type="match status" value="1"/>
</dbReference>
<dbReference type="SUPFAM" id="SSF56845">
    <property type="entry name" value="Diphtheria toxin, middle domain"/>
    <property type="match status" value="1"/>
</dbReference>
<feature type="signal peptide">
    <location>
        <begin position="1"/>
        <end position="25"/>
    </location>
</feature>
<feature type="chain" id="PRO_0000019347" description="Diphtheria toxin fragment A">
    <location>
        <begin position="26"/>
        <end position="218"/>
    </location>
</feature>
<feature type="chain" id="PRO_0000019348" description="Diphtheria toxin fragment B">
    <location>
        <begin position="219"/>
        <end position="560"/>
    </location>
</feature>
<feature type="active site">
    <location>
        <position position="173"/>
    </location>
</feature>
<feature type="binding site" evidence="1">
    <location>
        <position position="46"/>
    </location>
    <ligand>
        <name>NAD(+)</name>
        <dbReference type="ChEBI" id="CHEBI:57540"/>
    </ligand>
</feature>
<feature type="binding site" evidence="1">
    <location>
        <position position="90"/>
    </location>
    <ligand>
        <name>NAD(+)</name>
        <dbReference type="ChEBI" id="CHEBI:57540"/>
    </ligand>
</feature>
<feature type="disulfide bond" evidence="1">
    <location>
        <begin position="211"/>
        <end position="226"/>
    </location>
</feature>
<feature type="disulfide bond" evidence="1">
    <location>
        <begin position="486"/>
        <end position="496"/>
    </location>
</feature>
<accession>P00587</accession>
<sequence length="560" mass="60815">MSRKLFASILIGALLGIGAPPSAHAGADDVVDSSKSFVMENFSSYHGTKPGYVDSIQKGIQKPKSGTQGNYDDDWKGFYSTDNKYDAAGYSVDNENPLSGKAGGVVKVTYPGLTKVLALKVDNAETIKKELGLSLTEPLMEQVGTEEFIKRFGDGASRVVLSLPFAEGSSSVEYINNWEQAKALSVELEINFETRGKRGQDAMYEYMAQACAGNRVRRSVGSSLSCINLDWDVIRDKTKTKIESLKEHGPIKNKMSESPNKTVSEEKAKQYLEEFHQTALEHPELSELKTVTGTNPVFAGANYAAWAVNVAQVIDSETADNLEKTTAALSILPGIGSVMGIADGAVHHNTEEIVAQSIALSSLMVAQAIPLVGELVDIGFAAYNFVESIINLFQVVHNSYNRPAYSPGHKTQPFLHDGYAVSWNTVEDSIIRTGFQGESGHDIKITAENTPLPIAGVLLPTIPGKLDVNKSKTHISVNGRKIRMRCRAIDGDVTFCRPKSPVYVGNGVHANLHVAFHRSSSEKIHSNEISSDSIGVLGYQKTVDHTKVNSKLSLFFEIKS</sequence>
<comment type="function">
    <text>Diphtheria toxin, produced by a phage infecting Corynebacterium diphtheriae, is a proenzyme that, after activation, catalyzes the covalent attachment of the ADP ribose moiety of NAD to elongation factor 2. Fragment A is responsible for enzymatic ADP-ribosylation of elongation factor 2, while fragment B is responsible for binding of toxin to cell receptors and entry of fragment A.</text>
</comment>
<comment type="catalytic activity">
    <reaction>
        <text>diphthamide-[translation elongation factor 2] + NAD(+) = N-(ADP-D-ribosyl)diphthamide-[translation elongation factor 2] + nicotinamide + H(+)</text>
        <dbReference type="Rhea" id="RHEA:11820"/>
        <dbReference type="Rhea" id="RHEA-COMP:10174"/>
        <dbReference type="Rhea" id="RHEA-COMP:10175"/>
        <dbReference type="ChEBI" id="CHEBI:15378"/>
        <dbReference type="ChEBI" id="CHEBI:16692"/>
        <dbReference type="ChEBI" id="CHEBI:17154"/>
        <dbReference type="ChEBI" id="CHEBI:57540"/>
        <dbReference type="ChEBI" id="CHEBI:82697"/>
        <dbReference type="EC" id="2.4.2.36"/>
    </reaction>
</comment>
<comment type="subunit">
    <text>Homodimer.</text>
</comment>
<evidence type="ECO:0000250" key="1"/>
<reference key="1">
    <citation type="journal article" date="1983" name="Nucleic Acids Res.">
        <title>The complete nucleotide sequence of the gene coding for diphtheria toxin in the corynephage omega (tox+) genome.</title>
        <authorList>
            <person name="Ratti G."/>
            <person name="Rappuoli R."/>
            <person name="Giannini G."/>
        </authorList>
    </citation>
    <scope>NUCLEOTIDE SEQUENCE [GENOMIC DNA]</scope>
</reference>
<proteinExistence type="predicted"/>